<accession>B9M7V0</accession>
<proteinExistence type="inferred from homology"/>
<gene>
    <name evidence="1" type="primary">cbiD</name>
    <name type="ordered locus">Geob_0031</name>
</gene>
<organism>
    <name type="scientific">Geotalea daltonii (strain DSM 22248 / JCM 15807 / FRC-32)</name>
    <name type="common">Geobacter daltonii</name>
    <dbReference type="NCBI Taxonomy" id="316067"/>
    <lineage>
        <taxon>Bacteria</taxon>
        <taxon>Pseudomonadati</taxon>
        <taxon>Thermodesulfobacteriota</taxon>
        <taxon>Desulfuromonadia</taxon>
        <taxon>Geobacterales</taxon>
        <taxon>Geobacteraceae</taxon>
        <taxon>Geotalea</taxon>
    </lineage>
</organism>
<dbReference type="EC" id="2.1.1.195" evidence="1"/>
<dbReference type="EMBL" id="CP001390">
    <property type="protein sequence ID" value="ACM18408.1"/>
    <property type="molecule type" value="Genomic_DNA"/>
</dbReference>
<dbReference type="RefSeq" id="WP_012645137.1">
    <property type="nucleotide sequence ID" value="NC_011979.1"/>
</dbReference>
<dbReference type="SMR" id="B9M7V0"/>
<dbReference type="STRING" id="316067.Geob_0031"/>
<dbReference type="KEGG" id="geo:Geob_0031"/>
<dbReference type="eggNOG" id="COG1903">
    <property type="taxonomic scope" value="Bacteria"/>
</dbReference>
<dbReference type="HOGENOM" id="CLU_041273_0_0_7"/>
<dbReference type="OrthoDB" id="6439987at2"/>
<dbReference type="UniPathway" id="UPA00148">
    <property type="reaction ID" value="UER00227"/>
</dbReference>
<dbReference type="Proteomes" id="UP000007721">
    <property type="component" value="Chromosome"/>
</dbReference>
<dbReference type="GO" id="GO:0043780">
    <property type="term" value="F:cobalt-precorrin-5B C1-methyltransferase activity"/>
    <property type="evidence" value="ECO:0007669"/>
    <property type="project" value="RHEA"/>
</dbReference>
<dbReference type="GO" id="GO:0019251">
    <property type="term" value="P:anaerobic cobalamin biosynthetic process"/>
    <property type="evidence" value="ECO:0007669"/>
    <property type="project" value="UniProtKB-UniRule"/>
</dbReference>
<dbReference type="GO" id="GO:0032259">
    <property type="term" value="P:methylation"/>
    <property type="evidence" value="ECO:0007669"/>
    <property type="project" value="UniProtKB-KW"/>
</dbReference>
<dbReference type="Gene3D" id="3.30.2110.10">
    <property type="entry name" value="CbiD-like"/>
    <property type="match status" value="1"/>
</dbReference>
<dbReference type="HAMAP" id="MF_00787">
    <property type="entry name" value="CbiD"/>
    <property type="match status" value="1"/>
</dbReference>
<dbReference type="InterPro" id="IPR002748">
    <property type="entry name" value="CbiD"/>
</dbReference>
<dbReference type="InterPro" id="IPR036074">
    <property type="entry name" value="CbiD_sf"/>
</dbReference>
<dbReference type="NCBIfam" id="TIGR00312">
    <property type="entry name" value="cbiD"/>
    <property type="match status" value="1"/>
</dbReference>
<dbReference type="NCBIfam" id="NF000849">
    <property type="entry name" value="PRK00075.1-1"/>
    <property type="match status" value="1"/>
</dbReference>
<dbReference type="PANTHER" id="PTHR35863">
    <property type="entry name" value="COBALT-PRECORRIN-5B C(1)-METHYLTRANSFERASE"/>
    <property type="match status" value="1"/>
</dbReference>
<dbReference type="PANTHER" id="PTHR35863:SF1">
    <property type="entry name" value="COBALT-PRECORRIN-5B C(1)-METHYLTRANSFERASE"/>
    <property type="match status" value="1"/>
</dbReference>
<dbReference type="Pfam" id="PF01888">
    <property type="entry name" value="CbiD"/>
    <property type="match status" value="1"/>
</dbReference>
<dbReference type="PIRSF" id="PIRSF026782">
    <property type="entry name" value="CbiD"/>
    <property type="match status" value="1"/>
</dbReference>
<dbReference type="SUPFAM" id="SSF111342">
    <property type="entry name" value="CbiD-like"/>
    <property type="match status" value="1"/>
</dbReference>
<protein>
    <recommendedName>
        <fullName evidence="1">Cobalt-precorrin-5B C(1)-methyltransferase</fullName>
        <ecNumber evidence="1">2.1.1.195</ecNumber>
    </recommendedName>
    <alternativeName>
        <fullName evidence="1">Cobalt-precorrin-6A synthase</fullName>
    </alternativeName>
</protein>
<evidence type="ECO:0000255" key="1">
    <source>
        <dbReference type="HAMAP-Rule" id="MF_00787"/>
    </source>
</evidence>
<name>CBID_GEODF</name>
<sequence>MTRAFLRSGYTTGACAAAAAKGAAEMLRDGQVIDRVEIILPGGELVPFTLRNQQLGDKFASCSVIKDAGDDPDITNGAEINVSLTIEPAPPGTKGEIAVSGGTGIGKVTKPGLAVPVGEWAINPVPRKMIRVVINEVFAIRCVPSLMKVTVSIPNGEELAKKTLNARLGIIGGLSILGTTGIVKPISAKAWTDTIDAAIDVALACGSKTLILSTGRTSELVAERHLQLGKLTQEEAFIMMGDHVGYALKTCAAKGVREIVIAGQFAKLLKVACGHEQTHVSSSELDLQQLVSWLGPDPRTSGLVLLARRANTARQVLEESGNDPVLMAAVCERVKGFAARLVQESSIKVLLAGYGQEVLYFG</sequence>
<keyword id="KW-0169">Cobalamin biosynthesis</keyword>
<keyword id="KW-0489">Methyltransferase</keyword>
<keyword id="KW-1185">Reference proteome</keyword>
<keyword id="KW-0949">S-adenosyl-L-methionine</keyword>
<keyword id="KW-0808">Transferase</keyword>
<reference key="1">
    <citation type="submission" date="2009-01" db="EMBL/GenBank/DDBJ databases">
        <title>Complete sequence of Geobacter sp. FRC-32.</title>
        <authorList>
            <consortium name="US DOE Joint Genome Institute"/>
            <person name="Lucas S."/>
            <person name="Copeland A."/>
            <person name="Lapidus A."/>
            <person name="Glavina del Rio T."/>
            <person name="Dalin E."/>
            <person name="Tice H."/>
            <person name="Bruce D."/>
            <person name="Goodwin L."/>
            <person name="Pitluck S."/>
            <person name="Saunders E."/>
            <person name="Brettin T."/>
            <person name="Detter J.C."/>
            <person name="Han C."/>
            <person name="Larimer F."/>
            <person name="Land M."/>
            <person name="Hauser L."/>
            <person name="Kyrpides N."/>
            <person name="Ovchinnikova G."/>
            <person name="Kostka J."/>
            <person name="Richardson P."/>
        </authorList>
    </citation>
    <scope>NUCLEOTIDE SEQUENCE [LARGE SCALE GENOMIC DNA]</scope>
    <source>
        <strain>DSM 22248 / JCM 15807 / FRC-32</strain>
    </source>
</reference>
<comment type="function">
    <text evidence="1">Catalyzes the methylation of C-1 in cobalt-precorrin-5B to form cobalt-precorrin-6A.</text>
</comment>
<comment type="catalytic activity">
    <reaction evidence="1">
        <text>Co-precorrin-5B + S-adenosyl-L-methionine = Co-precorrin-6A + S-adenosyl-L-homocysteine</text>
        <dbReference type="Rhea" id="RHEA:26285"/>
        <dbReference type="ChEBI" id="CHEBI:57856"/>
        <dbReference type="ChEBI" id="CHEBI:59789"/>
        <dbReference type="ChEBI" id="CHEBI:60063"/>
        <dbReference type="ChEBI" id="CHEBI:60064"/>
        <dbReference type="EC" id="2.1.1.195"/>
    </reaction>
</comment>
<comment type="pathway">
    <text evidence="1">Cofactor biosynthesis; adenosylcobalamin biosynthesis; cob(II)yrinate a,c-diamide from sirohydrochlorin (anaerobic route): step 6/10.</text>
</comment>
<comment type="similarity">
    <text evidence="1">Belongs to the CbiD family.</text>
</comment>
<feature type="chain" id="PRO_1000148480" description="Cobalt-precorrin-5B C(1)-methyltransferase">
    <location>
        <begin position="1"/>
        <end position="362"/>
    </location>
</feature>